<dbReference type="EC" id="5.3.1.9" evidence="1"/>
<dbReference type="EMBL" id="CP000872">
    <property type="protein sequence ID" value="ABX61381.1"/>
    <property type="molecule type" value="Genomic_DNA"/>
</dbReference>
<dbReference type="RefSeq" id="WP_004689454.1">
    <property type="nucleotide sequence ID" value="NC_010103.1"/>
</dbReference>
<dbReference type="SMR" id="A9M7X1"/>
<dbReference type="GeneID" id="97534321"/>
<dbReference type="KEGG" id="bcs:BCAN_A0290"/>
<dbReference type="HOGENOM" id="CLU_017947_3_1_5"/>
<dbReference type="PhylomeDB" id="A9M7X1"/>
<dbReference type="UniPathway" id="UPA00109">
    <property type="reaction ID" value="UER00181"/>
</dbReference>
<dbReference type="UniPathway" id="UPA00138"/>
<dbReference type="PRO" id="PR:A9M7X1"/>
<dbReference type="Proteomes" id="UP000001385">
    <property type="component" value="Chromosome I"/>
</dbReference>
<dbReference type="GO" id="GO:0005829">
    <property type="term" value="C:cytosol"/>
    <property type="evidence" value="ECO:0007669"/>
    <property type="project" value="TreeGrafter"/>
</dbReference>
<dbReference type="GO" id="GO:0097367">
    <property type="term" value="F:carbohydrate derivative binding"/>
    <property type="evidence" value="ECO:0007669"/>
    <property type="project" value="InterPro"/>
</dbReference>
<dbReference type="GO" id="GO:0004347">
    <property type="term" value="F:glucose-6-phosphate isomerase activity"/>
    <property type="evidence" value="ECO:0007669"/>
    <property type="project" value="UniProtKB-UniRule"/>
</dbReference>
<dbReference type="GO" id="GO:0048029">
    <property type="term" value="F:monosaccharide binding"/>
    <property type="evidence" value="ECO:0007669"/>
    <property type="project" value="TreeGrafter"/>
</dbReference>
<dbReference type="GO" id="GO:0006094">
    <property type="term" value="P:gluconeogenesis"/>
    <property type="evidence" value="ECO:0007669"/>
    <property type="project" value="UniProtKB-UniRule"/>
</dbReference>
<dbReference type="GO" id="GO:0051156">
    <property type="term" value="P:glucose 6-phosphate metabolic process"/>
    <property type="evidence" value="ECO:0007669"/>
    <property type="project" value="TreeGrafter"/>
</dbReference>
<dbReference type="GO" id="GO:0006096">
    <property type="term" value="P:glycolytic process"/>
    <property type="evidence" value="ECO:0007669"/>
    <property type="project" value="UniProtKB-UniRule"/>
</dbReference>
<dbReference type="CDD" id="cd05015">
    <property type="entry name" value="SIS_PGI_1"/>
    <property type="match status" value="1"/>
</dbReference>
<dbReference type="CDD" id="cd05016">
    <property type="entry name" value="SIS_PGI_2"/>
    <property type="match status" value="1"/>
</dbReference>
<dbReference type="FunFam" id="3.40.50.10490:FF:000018">
    <property type="entry name" value="Glucose-6-phosphate isomerase"/>
    <property type="match status" value="1"/>
</dbReference>
<dbReference type="Gene3D" id="1.10.1390.10">
    <property type="match status" value="1"/>
</dbReference>
<dbReference type="Gene3D" id="3.40.50.10490">
    <property type="entry name" value="Glucose-6-phosphate isomerase like protein, domain 1"/>
    <property type="match status" value="2"/>
</dbReference>
<dbReference type="HAMAP" id="MF_00473">
    <property type="entry name" value="G6P_isomerase"/>
    <property type="match status" value="1"/>
</dbReference>
<dbReference type="InterPro" id="IPR001672">
    <property type="entry name" value="G6P_Isomerase"/>
</dbReference>
<dbReference type="InterPro" id="IPR023096">
    <property type="entry name" value="G6P_Isomerase_C"/>
</dbReference>
<dbReference type="InterPro" id="IPR018189">
    <property type="entry name" value="Phosphoglucose_isomerase_CS"/>
</dbReference>
<dbReference type="InterPro" id="IPR046348">
    <property type="entry name" value="SIS_dom_sf"/>
</dbReference>
<dbReference type="InterPro" id="IPR035476">
    <property type="entry name" value="SIS_PGI_1"/>
</dbReference>
<dbReference type="InterPro" id="IPR035482">
    <property type="entry name" value="SIS_PGI_2"/>
</dbReference>
<dbReference type="NCBIfam" id="NF001211">
    <property type="entry name" value="PRK00179.1"/>
    <property type="match status" value="1"/>
</dbReference>
<dbReference type="PANTHER" id="PTHR11469">
    <property type="entry name" value="GLUCOSE-6-PHOSPHATE ISOMERASE"/>
    <property type="match status" value="1"/>
</dbReference>
<dbReference type="PANTHER" id="PTHR11469:SF1">
    <property type="entry name" value="GLUCOSE-6-PHOSPHATE ISOMERASE"/>
    <property type="match status" value="1"/>
</dbReference>
<dbReference type="Pfam" id="PF00342">
    <property type="entry name" value="PGI"/>
    <property type="match status" value="1"/>
</dbReference>
<dbReference type="PRINTS" id="PR00662">
    <property type="entry name" value="G6PISOMERASE"/>
</dbReference>
<dbReference type="SUPFAM" id="SSF53697">
    <property type="entry name" value="SIS domain"/>
    <property type="match status" value="1"/>
</dbReference>
<dbReference type="PROSITE" id="PS00765">
    <property type="entry name" value="P_GLUCOSE_ISOMERASE_1"/>
    <property type="match status" value="1"/>
</dbReference>
<dbReference type="PROSITE" id="PS00174">
    <property type="entry name" value="P_GLUCOSE_ISOMERASE_2"/>
    <property type="match status" value="1"/>
</dbReference>
<dbReference type="PROSITE" id="PS51463">
    <property type="entry name" value="P_GLUCOSE_ISOMERASE_3"/>
    <property type="match status" value="1"/>
</dbReference>
<comment type="function">
    <text evidence="1">Catalyzes the reversible isomerization of glucose-6-phosphate to fructose-6-phosphate.</text>
</comment>
<comment type="catalytic activity">
    <reaction evidence="1">
        <text>alpha-D-glucose 6-phosphate = beta-D-fructose 6-phosphate</text>
        <dbReference type="Rhea" id="RHEA:11816"/>
        <dbReference type="ChEBI" id="CHEBI:57634"/>
        <dbReference type="ChEBI" id="CHEBI:58225"/>
        <dbReference type="EC" id="5.3.1.9"/>
    </reaction>
</comment>
<comment type="pathway">
    <text evidence="1">Carbohydrate biosynthesis; gluconeogenesis.</text>
</comment>
<comment type="pathway">
    <text evidence="1">Carbohydrate degradation; glycolysis; D-glyceraldehyde 3-phosphate and glycerone phosphate from D-glucose: step 2/4.</text>
</comment>
<comment type="subcellular location">
    <subcellularLocation>
        <location evidence="1">Cytoplasm</location>
    </subcellularLocation>
</comment>
<comment type="similarity">
    <text evidence="1">Belongs to the GPI family.</text>
</comment>
<protein>
    <recommendedName>
        <fullName evidence="1">Glucose-6-phosphate isomerase</fullName>
        <shortName evidence="1">GPI</shortName>
        <ecNumber evidence="1">5.3.1.9</ecNumber>
    </recommendedName>
    <alternativeName>
        <fullName evidence="1">Phosphoglucose isomerase</fullName>
        <shortName evidence="1">PGI</shortName>
    </alternativeName>
    <alternativeName>
        <fullName evidence="1">Phosphohexose isomerase</fullName>
        <shortName evidence="1">PHI</shortName>
    </alternativeName>
</protein>
<organism>
    <name type="scientific">Brucella canis (strain ATCC 23365 / NCTC 10854 / RM-666)</name>
    <dbReference type="NCBI Taxonomy" id="483179"/>
    <lineage>
        <taxon>Bacteria</taxon>
        <taxon>Pseudomonadati</taxon>
        <taxon>Pseudomonadota</taxon>
        <taxon>Alphaproteobacteria</taxon>
        <taxon>Hyphomicrobiales</taxon>
        <taxon>Brucellaceae</taxon>
        <taxon>Brucella/Ochrobactrum group</taxon>
        <taxon>Brucella</taxon>
    </lineage>
</organism>
<gene>
    <name evidence="1" type="primary">pgi</name>
    <name type="ordered locus">BCAN_A0290</name>
</gene>
<proteinExistence type="inferred from homology"/>
<sequence length="549" mass="59540">MARDATKLEATVAKLKKHWAESAPRDMRAAFSADPGRFGRYSLCLDDLLFDWSKCRVNDETMALLKELAVAADVEGRRAAMFAGEHINNTEDRAVLHVALRDTSSKEVLVDGHNVLPDVKHVLDRMAAFADGIRSGALKGATGRKITDIVNIGIGGSDLGPVMATLALAPYHDGPRAHFVSNIDGAHIADTLSPLDPASTLIIVASKTFTTIETMTNAQTARKWVADTLGEAAVGAHFAAVSTALDKVAAFGIPEDRVFGFWDWVGGRYSVWSAIGLPVMIAVGPDNFRKFLAGAHAMDVHFRDAPLEKNLPVMLGLIGYWHRAICGYGSRAIIPYDQRLSRLPAYLQQLDMESNGKSVTLDGKPVSGPTGPVVWGEPGTNGQHAFFQLLHQGTDTIPLEFIVAAKGHEPTLDHQHEMLMANCLAQSEALMKGRTLDEARAQLQAKNLPASQVERIAPHRVFSGNRPSLTLIHDMLDPYALGRLIALYEHRVFVEAQIFGINAFDQWGVELGKELATELLPVVSGKEGASGRDASTQGLVAHLHARRKA</sequence>
<reference key="1">
    <citation type="submission" date="2007-10" db="EMBL/GenBank/DDBJ databases">
        <title>Brucella canis ATCC 23365 whole genome shotgun sequencing project.</title>
        <authorList>
            <person name="Setubal J.C."/>
            <person name="Bowns C."/>
            <person name="Boyle S."/>
            <person name="Crasta O.R."/>
            <person name="Czar M.J."/>
            <person name="Dharmanolla C."/>
            <person name="Gillespie J.J."/>
            <person name="Kenyon R.W."/>
            <person name="Lu J."/>
            <person name="Mane S."/>
            <person name="Mohapatra S."/>
            <person name="Nagrani S."/>
            <person name="Purkayastha A."/>
            <person name="Rajasimha H.K."/>
            <person name="Shallom J.M."/>
            <person name="Shallom S."/>
            <person name="Shukla M."/>
            <person name="Snyder E.E."/>
            <person name="Sobral B.W."/>
            <person name="Wattam A.R."/>
            <person name="Will R."/>
            <person name="Williams K."/>
            <person name="Yoo H."/>
            <person name="Bruce D."/>
            <person name="Detter C."/>
            <person name="Munk C."/>
            <person name="Brettin T.S."/>
        </authorList>
    </citation>
    <scope>NUCLEOTIDE SEQUENCE [LARGE SCALE GENOMIC DNA]</scope>
    <source>
        <strain>ATCC 23365 / NCTC 10854 / RM-666</strain>
    </source>
</reference>
<evidence type="ECO:0000255" key="1">
    <source>
        <dbReference type="HAMAP-Rule" id="MF_00473"/>
    </source>
</evidence>
<name>G6PI_BRUC2</name>
<accession>A9M7X1</accession>
<keyword id="KW-0963">Cytoplasm</keyword>
<keyword id="KW-0312">Gluconeogenesis</keyword>
<keyword id="KW-0324">Glycolysis</keyword>
<keyword id="KW-0413">Isomerase</keyword>
<keyword id="KW-1185">Reference proteome</keyword>
<feature type="chain" id="PRO_1000081231" description="Glucose-6-phosphate isomerase">
    <location>
        <begin position="1"/>
        <end position="549"/>
    </location>
</feature>
<feature type="active site" description="Proton donor" evidence="1">
    <location>
        <position position="353"/>
    </location>
</feature>
<feature type="active site" evidence="1">
    <location>
        <position position="384"/>
    </location>
</feature>
<feature type="active site" evidence="1">
    <location>
        <position position="513"/>
    </location>
</feature>